<protein>
    <recommendedName>
        <fullName>Virion host shutoff protein</fullName>
        <shortName>Vhs</shortName>
        <ecNumber>3.1.27.-</ecNumber>
    </recommendedName>
</protein>
<dbReference type="EC" id="3.1.27.-"/>
<dbReference type="EMBL" id="AF007816">
    <property type="protein sequence ID" value="AAC58447.1"/>
    <property type="molecule type" value="Genomic_DNA"/>
</dbReference>
<dbReference type="GO" id="GO:0044423">
    <property type="term" value="C:virion component"/>
    <property type="evidence" value="ECO:0007669"/>
    <property type="project" value="UniProtKB-KW"/>
</dbReference>
<dbReference type="GO" id="GO:0004519">
    <property type="term" value="F:endonuclease activity"/>
    <property type="evidence" value="ECO:0007669"/>
    <property type="project" value="UniProtKB-KW"/>
</dbReference>
<dbReference type="GO" id="GO:0003723">
    <property type="term" value="F:RNA binding"/>
    <property type="evidence" value="ECO:0007669"/>
    <property type="project" value="UniProtKB-KW"/>
</dbReference>
<dbReference type="GO" id="GO:0039595">
    <property type="term" value="P:symbiont-mediated degradation of host mRNA"/>
    <property type="evidence" value="ECO:0007669"/>
    <property type="project" value="UniProtKB-KW"/>
</dbReference>
<dbReference type="GO" id="GO:0039657">
    <property type="term" value="P:symbiont-mediated suppression of host gene expression"/>
    <property type="evidence" value="ECO:0007669"/>
    <property type="project" value="UniProtKB-KW"/>
</dbReference>
<dbReference type="GO" id="GO:0052170">
    <property type="term" value="P:symbiont-mediated suppression of host innate immune response"/>
    <property type="evidence" value="ECO:0007669"/>
    <property type="project" value="UniProtKB-KW"/>
</dbReference>
<dbReference type="Gene3D" id="3.40.50.1010">
    <property type="entry name" value="5'-nuclease"/>
    <property type="match status" value="1"/>
</dbReference>
<dbReference type="InterPro" id="IPR029060">
    <property type="entry name" value="PIN-like_dom_sf"/>
</dbReference>
<dbReference type="InterPro" id="IPR006086">
    <property type="entry name" value="XPG-I_dom"/>
</dbReference>
<dbReference type="Pfam" id="PF00867">
    <property type="entry name" value="XPG_I"/>
    <property type="match status" value="1"/>
</dbReference>
<dbReference type="SUPFAM" id="SSF88723">
    <property type="entry name" value="PIN domain-like"/>
    <property type="match status" value="1"/>
</dbReference>
<organismHost>
    <name type="scientific">Homo sapiens</name>
    <name type="common">Human</name>
    <dbReference type="NCBI Taxonomy" id="9606"/>
</organismHost>
<reference key="1">
    <citation type="journal article" date="1997" name="J. Virol.">
        <title>Mutational analysis of the virion host shutoff gene (UL41) of herpes simplex virus (HSV): characterization of HSV type 1 (HSV-1)/HSV-2 chimeras.</title>
        <authorList>
            <person name="Everly D.N. Jr."/>
            <person name="Read G.S."/>
        </authorList>
    </citation>
    <scope>NUCLEOTIDE SEQUENCE [GENOMIC DNA]</scope>
</reference>
<reference key="2">
    <citation type="journal article" date="1996" name="J. Immunol.">
        <title>Human herpes simplex virus (HSV)-specific CD8+ CTL clones recognize HSV-2-infected fibroblasts after treatment with IFN-gamma or when virion host shutoff functions are disabled.</title>
        <authorList>
            <person name="Tigges M.A."/>
            <person name="Leng S."/>
            <person name="Johnson D.C."/>
            <person name="Burke R.L."/>
        </authorList>
    </citation>
    <scope>FUNCTION</scope>
</reference>
<feature type="chain" id="PRO_0000283699" description="Virion host shutoff protein">
    <location>
        <begin position="1"/>
        <end position="492"/>
    </location>
</feature>
<feature type="region of interest" description="Disordered" evidence="3">
    <location>
        <begin position="110"/>
        <end position="130"/>
    </location>
</feature>
<feature type="region of interest" description="Disordered" evidence="3">
    <location>
        <begin position="288"/>
        <end position="307"/>
    </location>
</feature>
<feature type="region of interest" description="Disordered" evidence="3">
    <location>
        <begin position="334"/>
        <end position="371"/>
    </location>
</feature>
<feature type="site" description="Necessary for the endonuclease activity" evidence="2">
    <location>
        <position position="215"/>
    </location>
</feature>
<evidence type="ECO:0000250" key="1"/>
<evidence type="ECO:0000250" key="2">
    <source>
        <dbReference type="UniProtKB" id="P68340"/>
    </source>
</evidence>
<evidence type="ECO:0000256" key="3">
    <source>
        <dbReference type="SAM" id="MobiDB-lite"/>
    </source>
</evidence>
<evidence type="ECO:0000305" key="4"/>
<sequence>MGLFGMMKFAQTHHLVKRRGLRAPEGYFTPIAVDLWNVMYTLVVKYQRRYPSYDREAITLHCLCSMLRVFTQKSLFPIFVTDRGVECTEPVVFGAKAILARTTAQCRTDEEASDVDASPPPSPITDSRPSFAFSNMRRRGHAFAPGDRGTRAAGPGPAAPWGAPSKPALRLAHLFCIRVLRALGYAYINSGQLEADDACANLYHTNTVAYVHTTDTDLLLMGCDIVLDISTGYIPTIHCRDLLQYFKMSYPQFLALFVRCHTDLHPNNTYASVEDVLRECHWTAPSRSQARRAARRERANSRSLESMPTLTAAPVGLETRISWTEILAQQIAGEDDYEEDPPLQPPDVAGGPRDGARSSSSEILTPPELVQVPNAQRVAEHRGYVAGRRRHVIHDAPEALDWLPDPMTIAELVEHRYVKYVISLISPKERGPWTLLKRLPIYQDLRDEDLARSIVTRHITAPDIADRFLAQLWAHAPPPAFYKDVLAKFWDE</sequence>
<accession>O39988</accession>
<gene>
    <name type="primary">UL41</name>
</gene>
<proteinExistence type="inferred from homology"/>
<organism>
    <name type="scientific">Human herpesvirus 2 (strain 333)</name>
    <name type="common">HHV-2</name>
    <name type="synonym">Human herpes simplex virus 2</name>
    <dbReference type="NCBI Taxonomy" id="10313"/>
    <lineage>
        <taxon>Viruses</taxon>
        <taxon>Duplodnaviria</taxon>
        <taxon>Heunggongvirae</taxon>
        <taxon>Peploviricota</taxon>
        <taxon>Herviviricetes</taxon>
        <taxon>Herpesvirales</taxon>
        <taxon>Orthoherpesviridae</taxon>
        <taxon>Alphaherpesvirinae</taxon>
        <taxon>Simplexvirus</taxon>
        <taxon>Simplexvirus humanalpha2</taxon>
        <taxon>Human herpesvirus 2</taxon>
    </lineage>
</organism>
<comment type="function">
    <text evidence="1 2">Minor structural protein that acts as an endoribonuclease during lytic infection. Degrades host mRNAs in the cytoplasm by cutting them at preferred sites, including some in regions of translation initiation. Together with inhibition of host splicing by ICP27, contributes to an overall decrease in host protein synthesis. Also, after the onset of viral transcription, accelerates the turnover of viral mRNA, thereby facilitating the sequential expression of different classes of viral genes. Binds translation initiation factors eIF4H, eIF4AI, and eIF4AII, thereby may interact directly with the translation initiation complex and thus digest specifically mRNAs. Also impedes antigen presentation by major histocompatibility complex class I and class II molecules, inhibits secretion of cytokines that would otherwise recruit lymphocytes and neutrophils cells to the site of infection and blocks the activation of dendritic cells. Impedes the alpha/beta interferon-mediated response to infection (By similarity). Inhibits the integrated stress response (ISR) in the infected cell, this function requires the endonuclease activity. Stress granule formation is thus inhibited, which allows protein synthesis and viral replication (By similarity).</text>
</comment>
<comment type="subunit">
    <text evidence="1">Interacts with human EIF4H, EIF4A1 and EIF4A2; interaction with eIF4AI and EIF4A2 presumably allows Vhs protein to associate with the eIF4F cap-binding complex.</text>
</comment>
<comment type="subcellular location">
    <subcellularLocation>
        <location evidence="2">Virion</location>
    </subcellularLocation>
</comment>
<comment type="similarity">
    <text evidence="4">Belongs to the herpesviridae VHS protein family.</text>
</comment>
<keyword id="KW-1132">Decay of host mRNAs by virus</keyword>
<keyword id="KW-0255">Endonuclease</keyword>
<keyword id="KW-1262">Eukaryotic host gene expression shutoff by virus</keyword>
<keyword id="KW-1190">Host gene expression shutoff by virus</keyword>
<keyword id="KW-1192">Host mRNA suppression by virus</keyword>
<keyword id="KW-0945">Host-virus interaction</keyword>
<keyword id="KW-0378">Hydrolase</keyword>
<keyword id="KW-1090">Inhibition of host innate immune response by virus</keyword>
<keyword id="KW-0922">Interferon antiviral system evasion</keyword>
<keyword id="KW-0426">Late protein</keyword>
<keyword id="KW-0540">Nuclease</keyword>
<keyword id="KW-0694">RNA-binding</keyword>
<keyword id="KW-0899">Viral immunoevasion</keyword>
<keyword id="KW-0946">Virion</keyword>
<name>SHUT_HHV23</name>